<sequence>MVAVPARYASTRLPGKPLQLIGDRPMIQHVAERALAAGAREVWVATDDARIAEAIQGLAGVRVAMTSSVHLSGTDRLAECARIAGWDAATCVVNLQGDEPFAPAAGIRAVAQVLQRSGAEMATLAAPVDSAHDLFDPNVVKLVRNAHGDALYFSRAPIPWHRDSFAAQRDAVPAGNHWLRHIGIYAYRAGFLQQFAAMPPGTLERIESLEQLRVLEAGYRIAVALTPEQFPPGIDTPEDLQRAQAQLASA</sequence>
<reference key="1">
    <citation type="journal article" date="2002" name="Nature">
        <title>Comparison of the genomes of two Xanthomonas pathogens with differing host specificities.</title>
        <authorList>
            <person name="da Silva A.C.R."/>
            <person name="Ferro J.A."/>
            <person name="Reinach F.C."/>
            <person name="Farah C.S."/>
            <person name="Furlan L.R."/>
            <person name="Quaggio R.B."/>
            <person name="Monteiro-Vitorello C.B."/>
            <person name="Van Sluys M.A."/>
            <person name="Almeida N.F. Jr."/>
            <person name="Alves L.M.C."/>
            <person name="do Amaral A.M."/>
            <person name="Bertolini M.C."/>
            <person name="Camargo L.E.A."/>
            <person name="Camarotte G."/>
            <person name="Cannavan F."/>
            <person name="Cardozo J."/>
            <person name="Chambergo F."/>
            <person name="Ciapina L.P."/>
            <person name="Cicarelli R.M.B."/>
            <person name="Coutinho L.L."/>
            <person name="Cursino-Santos J.R."/>
            <person name="El-Dorry H."/>
            <person name="Faria J.B."/>
            <person name="Ferreira A.J.S."/>
            <person name="Ferreira R.C.C."/>
            <person name="Ferro M.I.T."/>
            <person name="Formighieri E.F."/>
            <person name="Franco M.C."/>
            <person name="Greggio C.C."/>
            <person name="Gruber A."/>
            <person name="Katsuyama A.M."/>
            <person name="Kishi L.T."/>
            <person name="Leite R.P."/>
            <person name="Lemos E.G.M."/>
            <person name="Lemos M.V.F."/>
            <person name="Locali E.C."/>
            <person name="Machado M.A."/>
            <person name="Madeira A.M.B.N."/>
            <person name="Martinez-Rossi N.M."/>
            <person name="Martins E.C."/>
            <person name="Meidanis J."/>
            <person name="Menck C.F.M."/>
            <person name="Miyaki C.Y."/>
            <person name="Moon D.H."/>
            <person name="Moreira L.M."/>
            <person name="Novo M.T.M."/>
            <person name="Okura V.K."/>
            <person name="Oliveira M.C."/>
            <person name="Oliveira V.R."/>
            <person name="Pereira H.A."/>
            <person name="Rossi A."/>
            <person name="Sena J.A.D."/>
            <person name="Silva C."/>
            <person name="de Souza R.F."/>
            <person name="Spinola L.A.F."/>
            <person name="Takita M.A."/>
            <person name="Tamura R.E."/>
            <person name="Teixeira E.C."/>
            <person name="Tezza R.I.D."/>
            <person name="Trindade dos Santos M."/>
            <person name="Truffi D."/>
            <person name="Tsai S.M."/>
            <person name="White F.F."/>
            <person name="Setubal J.C."/>
            <person name="Kitajima J.P."/>
        </authorList>
    </citation>
    <scope>NUCLEOTIDE SEQUENCE [LARGE SCALE GENOMIC DNA]</scope>
    <source>
        <strain>ATCC 33913 / DSM 3586 / NCPPB 528 / LMG 568 / P 25</strain>
    </source>
</reference>
<name>KDSB_XANCP</name>
<accession>Q8P8W6</accession>
<comment type="function">
    <text evidence="1">Activates KDO (a required 8-carbon sugar) for incorporation into bacterial lipopolysaccharide in Gram-negative bacteria.</text>
</comment>
<comment type="catalytic activity">
    <reaction evidence="1">
        <text>3-deoxy-alpha-D-manno-oct-2-ulosonate + CTP = CMP-3-deoxy-beta-D-manno-octulosonate + diphosphate</text>
        <dbReference type="Rhea" id="RHEA:23448"/>
        <dbReference type="ChEBI" id="CHEBI:33019"/>
        <dbReference type="ChEBI" id="CHEBI:37563"/>
        <dbReference type="ChEBI" id="CHEBI:85986"/>
        <dbReference type="ChEBI" id="CHEBI:85987"/>
        <dbReference type="EC" id="2.7.7.38"/>
    </reaction>
</comment>
<comment type="pathway">
    <text evidence="1">Nucleotide-sugar biosynthesis; CMP-3-deoxy-D-manno-octulosonate biosynthesis; CMP-3-deoxy-D-manno-octulosonate from 3-deoxy-D-manno-octulosonate and CTP: step 1/1.</text>
</comment>
<comment type="pathway">
    <text evidence="1">Bacterial outer membrane biogenesis; lipopolysaccharide biosynthesis.</text>
</comment>
<comment type="subcellular location">
    <subcellularLocation>
        <location evidence="1">Cytoplasm</location>
    </subcellularLocation>
</comment>
<comment type="similarity">
    <text evidence="1">Belongs to the KdsB family.</text>
</comment>
<proteinExistence type="inferred from homology"/>
<evidence type="ECO:0000255" key="1">
    <source>
        <dbReference type="HAMAP-Rule" id="MF_00057"/>
    </source>
</evidence>
<evidence type="ECO:0000312" key="2">
    <source>
        <dbReference type="EMBL" id="AAM41403.1"/>
    </source>
</evidence>
<protein>
    <recommendedName>
        <fullName evidence="1">3-deoxy-manno-octulosonate cytidylyltransferase</fullName>
        <ecNumber evidence="1">2.7.7.38</ecNumber>
    </recommendedName>
    <alternativeName>
        <fullName evidence="1">CMP-2-keto-3-deoxyoctulosonic acid synthase</fullName>
        <shortName evidence="1">CKS</shortName>
        <shortName evidence="1">CMP-KDO synthase</shortName>
    </alternativeName>
</protein>
<gene>
    <name evidence="1" type="primary">kdsB</name>
    <name evidence="2" type="ordered locus">XCC2118</name>
</gene>
<organism>
    <name type="scientific">Xanthomonas campestris pv. campestris (strain ATCC 33913 / DSM 3586 / NCPPB 528 / LMG 568 / P 25)</name>
    <dbReference type="NCBI Taxonomy" id="190485"/>
    <lineage>
        <taxon>Bacteria</taxon>
        <taxon>Pseudomonadati</taxon>
        <taxon>Pseudomonadota</taxon>
        <taxon>Gammaproteobacteria</taxon>
        <taxon>Lysobacterales</taxon>
        <taxon>Lysobacteraceae</taxon>
        <taxon>Xanthomonas</taxon>
    </lineage>
</organism>
<dbReference type="EC" id="2.7.7.38" evidence="1"/>
<dbReference type="EMBL" id="AE008922">
    <property type="protein sequence ID" value="AAM41403.1"/>
    <property type="molecule type" value="Genomic_DNA"/>
</dbReference>
<dbReference type="RefSeq" id="NP_637479.2">
    <property type="nucleotide sequence ID" value="NC_003902.1"/>
</dbReference>
<dbReference type="SMR" id="Q8P8W6"/>
<dbReference type="STRING" id="190485.XCC2118"/>
<dbReference type="EnsemblBacteria" id="AAM41403">
    <property type="protein sequence ID" value="AAM41403"/>
    <property type="gene ID" value="XCC2118"/>
</dbReference>
<dbReference type="KEGG" id="xcc:XCC2118"/>
<dbReference type="PATRIC" id="fig|190485.4.peg.2268"/>
<dbReference type="eggNOG" id="COG1212">
    <property type="taxonomic scope" value="Bacteria"/>
</dbReference>
<dbReference type="HOGENOM" id="CLU_065038_1_0_6"/>
<dbReference type="OrthoDB" id="9815559at2"/>
<dbReference type="UniPathway" id="UPA00030"/>
<dbReference type="UniPathway" id="UPA00358">
    <property type="reaction ID" value="UER00476"/>
</dbReference>
<dbReference type="Proteomes" id="UP000001010">
    <property type="component" value="Chromosome"/>
</dbReference>
<dbReference type="GO" id="GO:0005829">
    <property type="term" value="C:cytosol"/>
    <property type="evidence" value="ECO:0000318"/>
    <property type="project" value="GO_Central"/>
</dbReference>
<dbReference type="GO" id="GO:0008690">
    <property type="term" value="F:3-deoxy-manno-octulosonate cytidylyltransferase activity"/>
    <property type="evidence" value="ECO:0000318"/>
    <property type="project" value="GO_Central"/>
</dbReference>
<dbReference type="GO" id="GO:0033468">
    <property type="term" value="P:CMP-keto-3-deoxy-D-manno-octulosonic acid biosynthetic process"/>
    <property type="evidence" value="ECO:0007669"/>
    <property type="project" value="UniProtKB-UniRule"/>
</dbReference>
<dbReference type="GO" id="GO:0009103">
    <property type="term" value="P:lipopolysaccharide biosynthetic process"/>
    <property type="evidence" value="ECO:0007669"/>
    <property type="project" value="UniProtKB-UniRule"/>
</dbReference>
<dbReference type="CDD" id="cd02517">
    <property type="entry name" value="CMP-KDO-Synthetase"/>
    <property type="match status" value="1"/>
</dbReference>
<dbReference type="FunFam" id="3.90.550.10:FF:000011">
    <property type="entry name" value="3-deoxy-manno-octulosonate cytidylyltransferase"/>
    <property type="match status" value="1"/>
</dbReference>
<dbReference type="Gene3D" id="3.90.550.10">
    <property type="entry name" value="Spore Coat Polysaccharide Biosynthesis Protein SpsA, Chain A"/>
    <property type="match status" value="1"/>
</dbReference>
<dbReference type="HAMAP" id="MF_00057">
    <property type="entry name" value="KdsB"/>
    <property type="match status" value="1"/>
</dbReference>
<dbReference type="InterPro" id="IPR003329">
    <property type="entry name" value="Cytidylyl_trans"/>
</dbReference>
<dbReference type="InterPro" id="IPR004528">
    <property type="entry name" value="KdsB"/>
</dbReference>
<dbReference type="InterPro" id="IPR029044">
    <property type="entry name" value="Nucleotide-diphossugar_trans"/>
</dbReference>
<dbReference type="NCBIfam" id="TIGR00466">
    <property type="entry name" value="kdsB"/>
    <property type="match status" value="1"/>
</dbReference>
<dbReference type="NCBIfam" id="NF003952">
    <property type="entry name" value="PRK05450.1-5"/>
    <property type="match status" value="1"/>
</dbReference>
<dbReference type="NCBIfam" id="NF009905">
    <property type="entry name" value="PRK13368.1"/>
    <property type="match status" value="1"/>
</dbReference>
<dbReference type="PANTHER" id="PTHR42866">
    <property type="entry name" value="3-DEOXY-MANNO-OCTULOSONATE CYTIDYLYLTRANSFERASE"/>
    <property type="match status" value="1"/>
</dbReference>
<dbReference type="PANTHER" id="PTHR42866:SF2">
    <property type="entry name" value="3-DEOXY-MANNO-OCTULOSONATE CYTIDYLYLTRANSFERASE, MITOCHONDRIAL"/>
    <property type="match status" value="1"/>
</dbReference>
<dbReference type="Pfam" id="PF02348">
    <property type="entry name" value="CTP_transf_3"/>
    <property type="match status" value="1"/>
</dbReference>
<dbReference type="SUPFAM" id="SSF53448">
    <property type="entry name" value="Nucleotide-diphospho-sugar transferases"/>
    <property type="match status" value="1"/>
</dbReference>
<keyword id="KW-0963">Cytoplasm</keyword>
<keyword id="KW-0448">Lipopolysaccharide biosynthesis</keyword>
<keyword id="KW-0548">Nucleotidyltransferase</keyword>
<keyword id="KW-1185">Reference proteome</keyword>
<keyword id="KW-0808">Transferase</keyword>
<feature type="chain" id="PRO_1000091913" description="3-deoxy-manno-octulosonate cytidylyltransferase">
    <location>
        <begin position="1"/>
        <end position="250"/>
    </location>
</feature>